<reference key="1">
    <citation type="journal article" date="2003" name="Nature">
        <title>Unique physiological and pathogenic features of Leptospira interrogans revealed by whole-genome sequencing.</title>
        <authorList>
            <person name="Ren S.-X."/>
            <person name="Fu G."/>
            <person name="Jiang X.-G."/>
            <person name="Zeng R."/>
            <person name="Miao Y.-G."/>
            <person name="Xu H."/>
            <person name="Zhang Y.-X."/>
            <person name="Xiong H."/>
            <person name="Lu G."/>
            <person name="Lu L.-F."/>
            <person name="Jiang H.-Q."/>
            <person name="Jia J."/>
            <person name="Tu Y.-F."/>
            <person name="Jiang J.-X."/>
            <person name="Gu W.-Y."/>
            <person name="Zhang Y.-Q."/>
            <person name="Cai Z."/>
            <person name="Sheng H.-H."/>
            <person name="Yin H.-F."/>
            <person name="Zhang Y."/>
            <person name="Zhu G.-F."/>
            <person name="Wan M."/>
            <person name="Huang H.-L."/>
            <person name="Qian Z."/>
            <person name="Wang S.-Y."/>
            <person name="Ma W."/>
            <person name="Yao Z.-J."/>
            <person name="Shen Y."/>
            <person name="Qiang B.-Q."/>
            <person name="Xia Q.-C."/>
            <person name="Guo X.-K."/>
            <person name="Danchin A."/>
            <person name="Saint Girons I."/>
            <person name="Somerville R.L."/>
            <person name="Wen Y.-M."/>
            <person name="Shi M.-H."/>
            <person name="Chen Z."/>
            <person name="Xu J.-G."/>
            <person name="Zhao G.-P."/>
        </authorList>
    </citation>
    <scope>NUCLEOTIDE SEQUENCE [LARGE SCALE GENOMIC DNA]</scope>
    <source>
        <strain>56601</strain>
    </source>
</reference>
<proteinExistence type="inferred from homology"/>
<gene>
    <name evidence="1" type="primary">lipA</name>
    <name type="ordered locus">LA_2292</name>
</gene>
<comment type="function">
    <text evidence="1">Catalyzes the radical-mediated insertion of two sulfur atoms into the C-6 and C-8 positions of the octanoyl moiety bound to the lipoyl domains of lipoate-dependent enzymes, thereby converting the octanoylated domains into lipoylated derivatives.</text>
</comment>
<comment type="catalytic activity">
    <reaction evidence="1">
        <text>[[Fe-S] cluster scaffold protein carrying a second [4Fe-4S](2+) cluster] + N(6)-octanoyl-L-lysyl-[protein] + 2 oxidized [2Fe-2S]-[ferredoxin] + 2 S-adenosyl-L-methionine + 4 H(+) = [[Fe-S] cluster scaffold protein] + N(6)-[(R)-dihydrolipoyl]-L-lysyl-[protein] + 4 Fe(3+) + 2 hydrogen sulfide + 2 5'-deoxyadenosine + 2 L-methionine + 2 reduced [2Fe-2S]-[ferredoxin]</text>
        <dbReference type="Rhea" id="RHEA:16585"/>
        <dbReference type="Rhea" id="RHEA-COMP:9928"/>
        <dbReference type="Rhea" id="RHEA-COMP:10000"/>
        <dbReference type="Rhea" id="RHEA-COMP:10001"/>
        <dbReference type="Rhea" id="RHEA-COMP:10475"/>
        <dbReference type="Rhea" id="RHEA-COMP:14568"/>
        <dbReference type="Rhea" id="RHEA-COMP:14569"/>
        <dbReference type="ChEBI" id="CHEBI:15378"/>
        <dbReference type="ChEBI" id="CHEBI:17319"/>
        <dbReference type="ChEBI" id="CHEBI:29034"/>
        <dbReference type="ChEBI" id="CHEBI:29919"/>
        <dbReference type="ChEBI" id="CHEBI:33722"/>
        <dbReference type="ChEBI" id="CHEBI:33737"/>
        <dbReference type="ChEBI" id="CHEBI:33738"/>
        <dbReference type="ChEBI" id="CHEBI:57844"/>
        <dbReference type="ChEBI" id="CHEBI:59789"/>
        <dbReference type="ChEBI" id="CHEBI:78809"/>
        <dbReference type="ChEBI" id="CHEBI:83100"/>
        <dbReference type="EC" id="2.8.1.8"/>
    </reaction>
</comment>
<comment type="cofactor">
    <cofactor evidence="1">
        <name>[4Fe-4S] cluster</name>
        <dbReference type="ChEBI" id="CHEBI:49883"/>
    </cofactor>
    <text evidence="1">Binds 2 [4Fe-4S] clusters per subunit. One cluster is coordinated with 3 cysteines and an exchangeable S-adenosyl-L-methionine.</text>
</comment>
<comment type="pathway">
    <text evidence="1">Protein modification; protein lipoylation via endogenous pathway; protein N(6)-(lipoyl)lysine from octanoyl-[acyl-carrier-protein]: step 2/2.</text>
</comment>
<comment type="subcellular location">
    <subcellularLocation>
        <location evidence="1">Cytoplasm</location>
    </subcellularLocation>
</comment>
<comment type="similarity">
    <text evidence="1">Belongs to the radical SAM superfamily. Lipoyl synthase family.</text>
</comment>
<protein>
    <recommendedName>
        <fullName evidence="1">Lipoyl synthase</fullName>
        <ecNumber evidence="1">2.8.1.8</ecNumber>
    </recommendedName>
    <alternativeName>
        <fullName evidence="1">Lip-syn</fullName>
        <shortName evidence="1">LS</shortName>
    </alternativeName>
    <alternativeName>
        <fullName evidence="1">Lipoate synthase</fullName>
    </alternativeName>
    <alternativeName>
        <fullName evidence="1">Lipoic acid synthase</fullName>
    </alternativeName>
    <alternativeName>
        <fullName evidence="1">Sulfur insertion protein LipA</fullName>
    </alternativeName>
</protein>
<evidence type="ECO:0000255" key="1">
    <source>
        <dbReference type="HAMAP-Rule" id="MF_00206"/>
    </source>
</evidence>
<evidence type="ECO:0000255" key="2">
    <source>
        <dbReference type="PROSITE-ProRule" id="PRU01266"/>
    </source>
</evidence>
<keyword id="KW-0004">4Fe-4S</keyword>
<keyword id="KW-0963">Cytoplasm</keyword>
<keyword id="KW-0408">Iron</keyword>
<keyword id="KW-0411">Iron-sulfur</keyword>
<keyword id="KW-0479">Metal-binding</keyword>
<keyword id="KW-1185">Reference proteome</keyword>
<keyword id="KW-0949">S-adenosyl-L-methionine</keyword>
<keyword id="KW-0808">Transferase</keyword>
<feature type="chain" id="PRO_0000102323" description="Lipoyl synthase">
    <location>
        <begin position="1"/>
        <end position="301"/>
    </location>
</feature>
<feature type="domain" description="Radical SAM core" evidence="2">
    <location>
        <begin position="65"/>
        <end position="279"/>
    </location>
</feature>
<feature type="binding site" evidence="1">
    <location>
        <position position="53"/>
    </location>
    <ligand>
        <name>[4Fe-4S] cluster</name>
        <dbReference type="ChEBI" id="CHEBI:49883"/>
        <label>1</label>
    </ligand>
</feature>
<feature type="binding site" evidence="1">
    <location>
        <position position="58"/>
    </location>
    <ligand>
        <name>[4Fe-4S] cluster</name>
        <dbReference type="ChEBI" id="CHEBI:49883"/>
        <label>1</label>
    </ligand>
</feature>
<feature type="binding site" evidence="1">
    <location>
        <position position="64"/>
    </location>
    <ligand>
        <name>[4Fe-4S] cluster</name>
        <dbReference type="ChEBI" id="CHEBI:49883"/>
        <label>1</label>
    </ligand>
</feature>
<feature type="binding site" evidence="1">
    <location>
        <position position="79"/>
    </location>
    <ligand>
        <name>[4Fe-4S] cluster</name>
        <dbReference type="ChEBI" id="CHEBI:49883"/>
        <label>2</label>
        <note>4Fe-4S-S-AdoMet</note>
    </ligand>
</feature>
<feature type="binding site" evidence="1">
    <location>
        <position position="83"/>
    </location>
    <ligand>
        <name>[4Fe-4S] cluster</name>
        <dbReference type="ChEBI" id="CHEBI:49883"/>
        <label>2</label>
        <note>4Fe-4S-S-AdoMet</note>
    </ligand>
</feature>
<feature type="binding site" evidence="1">
    <location>
        <position position="86"/>
    </location>
    <ligand>
        <name>[4Fe-4S] cluster</name>
        <dbReference type="ChEBI" id="CHEBI:49883"/>
        <label>2</label>
        <note>4Fe-4S-S-AdoMet</note>
    </ligand>
</feature>
<feature type="binding site" evidence="1">
    <location>
        <position position="290"/>
    </location>
    <ligand>
        <name>[4Fe-4S] cluster</name>
        <dbReference type="ChEBI" id="CHEBI:49883"/>
        <label>1</label>
    </ligand>
</feature>
<organism>
    <name type="scientific">Leptospira interrogans serogroup Icterohaemorrhagiae serovar Lai (strain 56601)</name>
    <dbReference type="NCBI Taxonomy" id="189518"/>
    <lineage>
        <taxon>Bacteria</taxon>
        <taxon>Pseudomonadati</taxon>
        <taxon>Spirochaetota</taxon>
        <taxon>Spirochaetia</taxon>
        <taxon>Leptospirales</taxon>
        <taxon>Leptospiraceae</taxon>
        <taxon>Leptospira</taxon>
    </lineage>
</organism>
<dbReference type="EC" id="2.8.1.8" evidence="1"/>
<dbReference type="EMBL" id="AE010300">
    <property type="protein sequence ID" value="AAN49491.1"/>
    <property type="molecule type" value="Genomic_DNA"/>
</dbReference>
<dbReference type="RefSeq" id="NP_712473.1">
    <property type="nucleotide sequence ID" value="NC_004342.2"/>
</dbReference>
<dbReference type="RefSeq" id="WP_001068714.1">
    <property type="nucleotide sequence ID" value="NC_004342.2"/>
</dbReference>
<dbReference type="SMR" id="Q8F3V7"/>
<dbReference type="FunCoup" id="Q8F3V7">
    <property type="interactions" value="504"/>
</dbReference>
<dbReference type="STRING" id="189518.LA_2292"/>
<dbReference type="PaxDb" id="189518-LA_2292"/>
<dbReference type="EnsemblBacteria" id="AAN49491">
    <property type="protein sequence ID" value="AAN49491"/>
    <property type="gene ID" value="LA_2292"/>
</dbReference>
<dbReference type="KEGG" id="lil:LA_2292"/>
<dbReference type="PATRIC" id="fig|189518.3.peg.2278"/>
<dbReference type="HOGENOM" id="CLU_033144_2_1_12"/>
<dbReference type="InParanoid" id="Q8F3V7"/>
<dbReference type="OrthoDB" id="9787898at2"/>
<dbReference type="UniPathway" id="UPA00538">
    <property type="reaction ID" value="UER00593"/>
</dbReference>
<dbReference type="Proteomes" id="UP000001408">
    <property type="component" value="Chromosome I"/>
</dbReference>
<dbReference type="GO" id="GO:0005737">
    <property type="term" value="C:cytoplasm"/>
    <property type="evidence" value="ECO:0007669"/>
    <property type="project" value="UniProtKB-SubCell"/>
</dbReference>
<dbReference type="GO" id="GO:0051539">
    <property type="term" value="F:4 iron, 4 sulfur cluster binding"/>
    <property type="evidence" value="ECO:0007669"/>
    <property type="project" value="UniProtKB-UniRule"/>
</dbReference>
<dbReference type="GO" id="GO:0016992">
    <property type="term" value="F:lipoate synthase activity"/>
    <property type="evidence" value="ECO:0007669"/>
    <property type="project" value="UniProtKB-UniRule"/>
</dbReference>
<dbReference type="GO" id="GO:0046872">
    <property type="term" value="F:metal ion binding"/>
    <property type="evidence" value="ECO:0007669"/>
    <property type="project" value="UniProtKB-KW"/>
</dbReference>
<dbReference type="CDD" id="cd01335">
    <property type="entry name" value="Radical_SAM"/>
    <property type="match status" value="1"/>
</dbReference>
<dbReference type="FunFam" id="3.20.20.70:FF:000186">
    <property type="entry name" value="Lipoyl synthase"/>
    <property type="match status" value="1"/>
</dbReference>
<dbReference type="Gene3D" id="3.20.20.70">
    <property type="entry name" value="Aldolase class I"/>
    <property type="match status" value="1"/>
</dbReference>
<dbReference type="HAMAP" id="MF_00206">
    <property type="entry name" value="Lipoyl_synth"/>
    <property type="match status" value="1"/>
</dbReference>
<dbReference type="InterPro" id="IPR013785">
    <property type="entry name" value="Aldolase_TIM"/>
</dbReference>
<dbReference type="InterPro" id="IPR006638">
    <property type="entry name" value="Elp3/MiaA/NifB-like_rSAM"/>
</dbReference>
<dbReference type="InterPro" id="IPR003698">
    <property type="entry name" value="Lipoyl_synth"/>
</dbReference>
<dbReference type="InterPro" id="IPR007197">
    <property type="entry name" value="rSAM"/>
</dbReference>
<dbReference type="NCBIfam" id="TIGR00510">
    <property type="entry name" value="lipA"/>
    <property type="match status" value="1"/>
</dbReference>
<dbReference type="NCBIfam" id="NF004019">
    <property type="entry name" value="PRK05481.1"/>
    <property type="match status" value="1"/>
</dbReference>
<dbReference type="NCBIfam" id="NF009544">
    <property type="entry name" value="PRK12928.1"/>
    <property type="match status" value="1"/>
</dbReference>
<dbReference type="PANTHER" id="PTHR10949">
    <property type="entry name" value="LIPOYL SYNTHASE"/>
    <property type="match status" value="1"/>
</dbReference>
<dbReference type="PANTHER" id="PTHR10949:SF0">
    <property type="entry name" value="LIPOYL SYNTHASE, MITOCHONDRIAL"/>
    <property type="match status" value="1"/>
</dbReference>
<dbReference type="Pfam" id="PF04055">
    <property type="entry name" value="Radical_SAM"/>
    <property type="match status" value="1"/>
</dbReference>
<dbReference type="PIRSF" id="PIRSF005963">
    <property type="entry name" value="Lipoyl_synth"/>
    <property type="match status" value="1"/>
</dbReference>
<dbReference type="SFLD" id="SFLDF00271">
    <property type="entry name" value="lipoyl_synthase"/>
    <property type="match status" value="1"/>
</dbReference>
<dbReference type="SFLD" id="SFLDG01058">
    <property type="entry name" value="lipoyl_synthase_like"/>
    <property type="match status" value="1"/>
</dbReference>
<dbReference type="SMART" id="SM00729">
    <property type="entry name" value="Elp3"/>
    <property type="match status" value="1"/>
</dbReference>
<dbReference type="SUPFAM" id="SSF102114">
    <property type="entry name" value="Radical SAM enzymes"/>
    <property type="match status" value="1"/>
</dbReference>
<dbReference type="PROSITE" id="PS51918">
    <property type="entry name" value="RADICAL_SAM"/>
    <property type="match status" value="1"/>
</dbReference>
<name>LIPA_LEPIN</name>
<accession>Q8F3V7</accession>
<sequence>MNPLKKKPRTHSLQNAPEKPDWLKVKLAFPDPKNNPVAIVRNSLEEKKLNTVCESASCPNLNHCWSRKTATYMLGGDICTRRCSYCDVASGKPFPLDPEEPKRIAESSIALDLRHVVITSVNRDDLEDGGAAHFAKTVKEIRKGLPDCKIELLIPDLKVKQEALEIIFECNPDIFNHNLETVKRLFPEVAPQKRYERSLDVLKIASARGFLTKSGLILGMGETLEEVKECMQDLASVGVSLLTLGQYLQPTSTHLPVKEYVVPQVFKDLRIYGKSIGFKGVFSGPLVRSSYHADEQISWNP</sequence>